<comment type="subcellular location">
    <subcellularLocation>
        <location evidence="1">Cell inner membrane</location>
        <topology evidence="1">Multi-pass membrane protein</topology>
    </subcellularLocation>
</comment>
<comment type="similarity">
    <text evidence="1">Belongs to the UPF0266 family.</text>
</comment>
<proteinExistence type="inferred from homology"/>
<name>YOBD_SHIBS</name>
<dbReference type="EMBL" id="CP000036">
    <property type="protein sequence ID" value="ABB65861.1"/>
    <property type="molecule type" value="Genomic_DNA"/>
</dbReference>
<dbReference type="RefSeq" id="WP_000156246.1">
    <property type="nucleotide sequence ID" value="NC_007613.1"/>
</dbReference>
<dbReference type="KEGG" id="sbo:SBO_1232"/>
<dbReference type="HOGENOM" id="CLU_133645_0_0_6"/>
<dbReference type="Proteomes" id="UP000007067">
    <property type="component" value="Chromosome"/>
</dbReference>
<dbReference type="GO" id="GO:0005886">
    <property type="term" value="C:plasma membrane"/>
    <property type="evidence" value="ECO:0007669"/>
    <property type="project" value="UniProtKB-SubCell"/>
</dbReference>
<dbReference type="HAMAP" id="MF_01071">
    <property type="entry name" value="UPF0266"/>
    <property type="match status" value="1"/>
</dbReference>
<dbReference type="InterPro" id="IPR009328">
    <property type="entry name" value="DUF986"/>
</dbReference>
<dbReference type="NCBIfam" id="NF002791">
    <property type="entry name" value="PRK02913.1"/>
    <property type="match status" value="1"/>
</dbReference>
<dbReference type="Pfam" id="PF06173">
    <property type="entry name" value="DUF986"/>
    <property type="match status" value="1"/>
</dbReference>
<dbReference type="PIRSF" id="PIRSF020687">
    <property type="entry name" value="UCP020687"/>
    <property type="match status" value="1"/>
</dbReference>
<feature type="chain" id="PRO_1000064591" description="UPF0266 membrane protein YobD">
    <location>
        <begin position="1"/>
        <end position="158"/>
    </location>
</feature>
<feature type="transmembrane region" description="Helical" evidence="1">
    <location>
        <begin position="6"/>
        <end position="26"/>
    </location>
</feature>
<feature type="transmembrane region" description="Helical" evidence="1">
    <location>
        <begin position="45"/>
        <end position="65"/>
    </location>
</feature>
<feature type="transmembrane region" description="Helical" evidence="1">
    <location>
        <begin position="67"/>
        <end position="87"/>
    </location>
</feature>
<keyword id="KW-0997">Cell inner membrane</keyword>
<keyword id="KW-1003">Cell membrane</keyword>
<keyword id="KW-0472">Membrane</keyword>
<keyword id="KW-0812">Transmembrane</keyword>
<keyword id="KW-1133">Transmembrane helix</keyword>
<accession>Q321Z7</accession>
<sequence>MTITDLVLILFIAALLAFAIYDQFIMPRRNGPTLLAIPLLRRGRIDSVIFVGLIVILIYNNVTNHGALITTWLLSALALMGFYIFWIRIPKIIFKQKGFFFANVWIEYSRIKAMNLSEDGVLVMQLEQRRLLIRVRNIDDLEKIYKLLVSGNAANLLI</sequence>
<reference key="1">
    <citation type="journal article" date="2005" name="Nucleic Acids Res.">
        <title>Genome dynamics and diversity of Shigella species, the etiologic agents of bacillary dysentery.</title>
        <authorList>
            <person name="Yang F."/>
            <person name="Yang J."/>
            <person name="Zhang X."/>
            <person name="Chen L."/>
            <person name="Jiang Y."/>
            <person name="Yan Y."/>
            <person name="Tang X."/>
            <person name="Wang J."/>
            <person name="Xiong Z."/>
            <person name="Dong J."/>
            <person name="Xue Y."/>
            <person name="Zhu Y."/>
            <person name="Xu X."/>
            <person name="Sun L."/>
            <person name="Chen S."/>
            <person name="Nie H."/>
            <person name="Peng J."/>
            <person name="Xu J."/>
            <person name="Wang Y."/>
            <person name="Yuan Z."/>
            <person name="Wen Y."/>
            <person name="Yao Z."/>
            <person name="Shen Y."/>
            <person name="Qiang B."/>
            <person name="Hou Y."/>
            <person name="Yu J."/>
            <person name="Jin Q."/>
        </authorList>
    </citation>
    <scope>NUCLEOTIDE SEQUENCE [LARGE SCALE GENOMIC DNA]</scope>
    <source>
        <strain>Sb227</strain>
    </source>
</reference>
<gene>
    <name evidence="1" type="primary">yobD</name>
    <name type="ordered locus">SBO_1232</name>
</gene>
<evidence type="ECO:0000255" key="1">
    <source>
        <dbReference type="HAMAP-Rule" id="MF_01071"/>
    </source>
</evidence>
<protein>
    <recommendedName>
        <fullName evidence="1">UPF0266 membrane protein YobD</fullName>
    </recommendedName>
</protein>
<organism>
    <name type="scientific">Shigella boydii serotype 4 (strain Sb227)</name>
    <dbReference type="NCBI Taxonomy" id="300268"/>
    <lineage>
        <taxon>Bacteria</taxon>
        <taxon>Pseudomonadati</taxon>
        <taxon>Pseudomonadota</taxon>
        <taxon>Gammaproteobacteria</taxon>
        <taxon>Enterobacterales</taxon>
        <taxon>Enterobacteriaceae</taxon>
        <taxon>Shigella</taxon>
    </lineage>
</organism>